<name>OSMB_ECOLI</name>
<sequence length="72" mass="6948">MFVTSKKMTAAVLAITLAMSLSACSNWSKRDRNTAIGAGAGALGGAVLTDGSTLGTLGGAAVGGVIGHQVGK</sequence>
<protein>
    <recommendedName>
        <fullName>Osmotically-inducible lipoprotein B</fullName>
    </recommendedName>
</protein>
<keyword id="KW-1003">Cell membrane</keyword>
<keyword id="KW-0449">Lipoprotein</keyword>
<keyword id="KW-0472">Membrane</keyword>
<keyword id="KW-0564">Palmitate</keyword>
<keyword id="KW-1185">Reference proteome</keyword>
<keyword id="KW-0732">Signal</keyword>
<gene>
    <name type="primary">osmB</name>
    <name type="ordered locus">b1283</name>
    <name type="ordered locus">JW1275</name>
</gene>
<accession>P0ADA7</accession>
<accession>P17873</accession>
<comment type="function">
    <text>Provides resistance to osmotic stress. May be important for stationary-phase survival.</text>
</comment>
<comment type="subcellular location">
    <subcellularLocation>
        <location evidence="1">Cell membrane</location>
        <topology evidence="1">Lipid-anchor</topology>
    </subcellularLocation>
</comment>
<comment type="induction">
    <text>By elevated osmotic pressure in the growth medium.</text>
</comment>
<feature type="signal peptide">
    <location>
        <begin position="1"/>
        <end position="23"/>
    </location>
</feature>
<feature type="chain" id="PRO_0000018069" description="Osmotically-inducible lipoprotein B">
    <location>
        <begin position="24"/>
        <end position="72"/>
    </location>
</feature>
<feature type="lipid moiety-binding region" description="N-palmitoyl cysteine" evidence="1">
    <location>
        <position position="24"/>
    </location>
</feature>
<feature type="lipid moiety-binding region" description="S-diacylglycerol cysteine" evidence="1">
    <location>
        <position position="24"/>
    </location>
</feature>
<organism>
    <name type="scientific">Escherichia coli (strain K12)</name>
    <dbReference type="NCBI Taxonomy" id="83333"/>
    <lineage>
        <taxon>Bacteria</taxon>
        <taxon>Pseudomonadati</taxon>
        <taxon>Pseudomonadota</taxon>
        <taxon>Gammaproteobacteria</taxon>
        <taxon>Enterobacterales</taxon>
        <taxon>Enterobacteriaceae</taxon>
        <taxon>Escherichia</taxon>
    </lineage>
</organism>
<dbReference type="EMBL" id="M22859">
    <property type="protein sequence ID" value="AAA24256.1"/>
    <property type="molecule type" value="Genomic_DNA"/>
</dbReference>
<dbReference type="EMBL" id="U00096">
    <property type="protein sequence ID" value="AAC74365.1"/>
    <property type="molecule type" value="Genomic_DNA"/>
</dbReference>
<dbReference type="EMBL" id="AP009048">
    <property type="protein sequence ID" value="BAA14837.1"/>
    <property type="molecule type" value="Genomic_DNA"/>
</dbReference>
<dbReference type="PIR" id="A32255">
    <property type="entry name" value="LPECOB"/>
</dbReference>
<dbReference type="RefSeq" id="NP_415799.1">
    <property type="nucleotide sequence ID" value="NC_000913.3"/>
</dbReference>
<dbReference type="RefSeq" id="WP_000498253.1">
    <property type="nucleotide sequence ID" value="NZ_STEB01000005.1"/>
</dbReference>
<dbReference type="BioGRID" id="4260738">
    <property type="interactions" value="183"/>
</dbReference>
<dbReference type="FunCoup" id="P0ADA7">
    <property type="interactions" value="23"/>
</dbReference>
<dbReference type="STRING" id="511145.b1283"/>
<dbReference type="jPOST" id="P0ADA7"/>
<dbReference type="PaxDb" id="511145-b1283"/>
<dbReference type="EnsemblBacteria" id="AAC74365">
    <property type="protein sequence ID" value="AAC74365"/>
    <property type="gene ID" value="b1283"/>
</dbReference>
<dbReference type="GeneID" id="93775406"/>
<dbReference type="GeneID" id="945866"/>
<dbReference type="KEGG" id="ecj:JW1275"/>
<dbReference type="KEGG" id="eco:b1283"/>
<dbReference type="KEGG" id="ecoc:C3026_07530"/>
<dbReference type="PATRIC" id="fig|511145.12.peg.1335"/>
<dbReference type="EchoBASE" id="EB0673"/>
<dbReference type="eggNOG" id="ENOG5032SFP">
    <property type="taxonomic scope" value="Bacteria"/>
</dbReference>
<dbReference type="HOGENOM" id="CLU_158447_1_2_6"/>
<dbReference type="InParanoid" id="P0ADA7"/>
<dbReference type="OMA" id="GVIGHET"/>
<dbReference type="OrthoDB" id="6466856at2"/>
<dbReference type="BioCyc" id="EcoCyc:EG10679-MONOMER"/>
<dbReference type="PRO" id="PR:P0ADA7"/>
<dbReference type="Proteomes" id="UP000000625">
    <property type="component" value="Chromosome"/>
</dbReference>
<dbReference type="GO" id="GO:0019867">
    <property type="term" value="C:outer membrane"/>
    <property type="evidence" value="ECO:0007669"/>
    <property type="project" value="InterPro"/>
</dbReference>
<dbReference type="GO" id="GO:0005886">
    <property type="term" value="C:plasma membrane"/>
    <property type="evidence" value="ECO:0007669"/>
    <property type="project" value="UniProtKB-SubCell"/>
</dbReference>
<dbReference type="GO" id="GO:0006970">
    <property type="term" value="P:response to osmotic stress"/>
    <property type="evidence" value="ECO:0000270"/>
    <property type="project" value="EcoCyc"/>
</dbReference>
<dbReference type="InterPro" id="IPR008816">
    <property type="entry name" value="Gly_zipper_2TM_dom"/>
</dbReference>
<dbReference type="NCBIfam" id="NF007830">
    <property type="entry name" value="PRK10540.1"/>
    <property type="match status" value="1"/>
</dbReference>
<dbReference type="Pfam" id="PF05433">
    <property type="entry name" value="Rick_17kDa_Anti"/>
    <property type="match status" value="1"/>
</dbReference>
<dbReference type="PROSITE" id="PS51257">
    <property type="entry name" value="PROKAR_LIPOPROTEIN"/>
    <property type="match status" value="1"/>
</dbReference>
<reference key="1">
    <citation type="journal article" date="1989" name="J. Bacteriol.">
        <title>Sequence of an osmotically inducible lipoprotein gene.</title>
        <authorList>
            <person name="Jung J.U."/>
            <person name="Gutierrez C."/>
            <person name="Villarejo M.R."/>
        </authorList>
    </citation>
    <scope>NUCLEOTIDE SEQUENCE [GENOMIC DNA]</scope>
</reference>
<reference key="2">
    <citation type="journal article" date="1996" name="DNA Res.">
        <title>A 570-kb DNA sequence of the Escherichia coli K-12 genome corresponding to the 28.0-40.1 min region on the linkage map.</title>
        <authorList>
            <person name="Aiba H."/>
            <person name="Baba T."/>
            <person name="Fujita K."/>
            <person name="Hayashi K."/>
            <person name="Inada T."/>
            <person name="Isono K."/>
            <person name="Itoh T."/>
            <person name="Kasai H."/>
            <person name="Kashimoto K."/>
            <person name="Kimura S."/>
            <person name="Kitakawa M."/>
            <person name="Kitagawa M."/>
            <person name="Makino K."/>
            <person name="Miki T."/>
            <person name="Mizobuchi K."/>
            <person name="Mori H."/>
            <person name="Mori T."/>
            <person name="Motomura K."/>
            <person name="Nakade S."/>
            <person name="Nakamura Y."/>
            <person name="Nashimoto H."/>
            <person name="Nishio Y."/>
            <person name="Oshima T."/>
            <person name="Saito N."/>
            <person name="Sampei G."/>
            <person name="Seki Y."/>
            <person name="Sivasundaram S."/>
            <person name="Tagami H."/>
            <person name="Takeda J."/>
            <person name="Takemoto K."/>
            <person name="Takeuchi Y."/>
            <person name="Wada C."/>
            <person name="Yamamoto Y."/>
            <person name="Horiuchi T."/>
        </authorList>
    </citation>
    <scope>NUCLEOTIDE SEQUENCE [LARGE SCALE GENOMIC DNA]</scope>
    <source>
        <strain>K12 / W3110 / ATCC 27325 / DSM 5911</strain>
    </source>
</reference>
<reference key="3">
    <citation type="journal article" date="1997" name="Science">
        <title>The complete genome sequence of Escherichia coli K-12.</title>
        <authorList>
            <person name="Blattner F.R."/>
            <person name="Plunkett G. III"/>
            <person name="Bloch C.A."/>
            <person name="Perna N.T."/>
            <person name="Burland V."/>
            <person name="Riley M."/>
            <person name="Collado-Vides J."/>
            <person name="Glasner J.D."/>
            <person name="Rode C.K."/>
            <person name="Mayhew G.F."/>
            <person name="Gregor J."/>
            <person name="Davis N.W."/>
            <person name="Kirkpatrick H.A."/>
            <person name="Goeden M.A."/>
            <person name="Rose D.J."/>
            <person name="Mau B."/>
            <person name="Shao Y."/>
        </authorList>
    </citation>
    <scope>NUCLEOTIDE SEQUENCE [LARGE SCALE GENOMIC DNA]</scope>
    <source>
        <strain>K12 / MG1655 / ATCC 47076</strain>
    </source>
</reference>
<reference key="4">
    <citation type="journal article" date="2006" name="Mol. Syst. Biol.">
        <title>Highly accurate genome sequences of Escherichia coli K-12 strains MG1655 and W3110.</title>
        <authorList>
            <person name="Hayashi K."/>
            <person name="Morooka N."/>
            <person name="Yamamoto Y."/>
            <person name="Fujita K."/>
            <person name="Isono K."/>
            <person name="Choi S."/>
            <person name="Ohtsubo E."/>
            <person name="Baba T."/>
            <person name="Wanner B.L."/>
            <person name="Mori H."/>
            <person name="Horiuchi T."/>
        </authorList>
    </citation>
    <scope>NUCLEOTIDE SEQUENCE [LARGE SCALE GENOMIC DNA]</scope>
    <source>
        <strain>K12 / W3110 / ATCC 27325 / DSM 5911</strain>
    </source>
</reference>
<proteinExistence type="evidence at transcript level"/>
<evidence type="ECO:0000305" key="1"/>